<sequence>MHKKLKAWGGATGLFVVALGVTIIALPMRQKNSHGTMIIDGTVTQIFSTYQGNLSNVWLTQTDPQGNVVKSWTTRYQTLPDPSSQKLNLIPDYSQSNASRDYNVLSIYQLGKGCFLAFPYKLLTAEKMLVFLSKRFLGSYHEPPR</sequence>
<comment type="function">
    <text>Involved in TCP pilus biogenesis.</text>
</comment>
<feature type="chain" id="PRO_0000072466" description="Toxin coregulated pilus biosynthesis protein H">
    <location>
        <begin position="1"/>
        <end position="145"/>
    </location>
</feature>
<feature type="sequence variant" description="In strain: Z17561.">
    <original>T</original>
    <variation>A</variation>
    <location>
        <position position="12"/>
    </location>
</feature>
<feature type="sequence variant" description="In strain: Z17561.">
    <original>I</original>
    <variation>L</variation>
    <location>
        <position position="23"/>
    </location>
</feature>
<feature type="sequence variant" description="In strain: Z17561.">
    <original>Q</original>
    <variation>E</variation>
    <location>
        <position position="95"/>
    </location>
</feature>
<feature type="sequence variant" description="In strain: Z17561.">
    <original>A</original>
    <variation>V</variation>
    <location>
        <position position="98"/>
    </location>
</feature>
<feature type="sequence variant" description="In strain: Z17561.">
    <original>L</original>
    <variation>Q</variation>
    <location>
        <position position="122"/>
    </location>
</feature>
<feature type="sequence conflict" description="In Ref. 2." evidence="1" ref="2">
    <original>LVFLSKRFLGSYHEPPR</original>
    <variation>WFSCQSD</variation>
    <location>
        <begin position="129"/>
        <end position="145"/>
    </location>
</feature>
<accession>P29489</accession>
<accession>Q56664</accession>
<accession>Q9KTR4</accession>
<protein>
    <recommendedName>
        <fullName>Toxin coregulated pilus biosynthesis protein H</fullName>
    </recommendedName>
    <alternativeName>
        <fullName>TCP pilus biosynthesis protein TcpH</fullName>
    </alternativeName>
</protein>
<reference key="1">
    <citation type="journal article" date="1996" name="Gene">
        <title>Comparison of the promoter proximal regions of the toxin-co-regulated tcp gene cluster in classical and El Tor strains of Vibrio cholerae O1.</title>
        <authorList>
            <person name="Ogierman M.A."/>
            <person name="Voss E."/>
            <person name="Meaney C."/>
            <person name="Faast R."/>
            <person name="Attridge S.R."/>
            <person name="Manning P.A."/>
        </authorList>
    </citation>
    <scope>NUCLEOTIDE SEQUENCE [GENOMIC DNA]</scope>
    <source>
        <strain>Classical Inaba Z17561 / Serotype O1</strain>
        <strain>El Tor H1 / Serotype O1</strain>
    </source>
</reference>
<reference key="2">
    <citation type="journal article" date="2000" name="Nature">
        <title>DNA sequence of both chromosomes of the cholera pathogen Vibrio cholerae.</title>
        <authorList>
            <person name="Heidelberg J.F."/>
            <person name="Eisen J.A."/>
            <person name="Nelson W.C."/>
            <person name="Clayton R.A."/>
            <person name="Gwinn M.L."/>
            <person name="Dodson R.J."/>
            <person name="Haft D.H."/>
            <person name="Hickey E.K."/>
            <person name="Peterson J.D."/>
            <person name="Umayam L.A."/>
            <person name="Gill S.R."/>
            <person name="Nelson K.E."/>
            <person name="Read T.D."/>
            <person name="Tettelin H."/>
            <person name="Richardson D.L."/>
            <person name="Ermolaeva M.D."/>
            <person name="Vamathevan J.J."/>
            <person name="Bass S."/>
            <person name="Qin H."/>
            <person name="Dragoi I."/>
            <person name="Sellers P."/>
            <person name="McDonald L.A."/>
            <person name="Utterback T.R."/>
            <person name="Fleischmann R.D."/>
            <person name="Nierman W.C."/>
            <person name="White O."/>
            <person name="Salzberg S.L."/>
            <person name="Smith H.O."/>
            <person name="Colwell R.R."/>
            <person name="Mekalanos J.J."/>
            <person name="Venter J.C."/>
            <person name="Fraser C.M."/>
        </authorList>
    </citation>
    <scope>NUCLEOTIDE SEQUENCE [LARGE SCALE GENOMIC DNA]</scope>
    <source>
        <strain>ATCC 39315 / El Tor Inaba N16961</strain>
    </source>
</reference>
<evidence type="ECO:0000305" key="1"/>
<keyword id="KW-1185">Reference proteome</keyword>
<dbReference type="EMBL" id="X64098">
    <property type="protein sequence ID" value="CAA45454.1"/>
    <property type="molecule type" value="Genomic_DNA"/>
</dbReference>
<dbReference type="EMBL" id="X74730">
    <property type="protein sequence ID" value="CAA52744.1"/>
    <property type="molecule type" value="Genomic_DNA"/>
</dbReference>
<dbReference type="EMBL" id="AE003852">
    <property type="protein sequence ID" value="AAF93990.1"/>
    <property type="molecule type" value="Genomic_DNA"/>
</dbReference>
<dbReference type="PIR" id="JC4721">
    <property type="entry name" value="JC4721"/>
</dbReference>
<dbReference type="PIR" id="S23263">
    <property type="entry name" value="S23263"/>
</dbReference>
<dbReference type="RefSeq" id="NP_230475.1">
    <property type="nucleotide sequence ID" value="NC_002505.1"/>
</dbReference>
<dbReference type="STRING" id="243277.VC_0827"/>
<dbReference type="DNASU" id="2614494"/>
<dbReference type="EnsemblBacteria" id="AAF93990">
    <property type="protein sequence ID" value="AAF93990"/>
    <property type="gene ID" value="VC_0827"/>
</dbReference>
<dbReference type="KEGG" id="vch:VC_0827"/>
<dbReference type="PATRIC" id="fig|243277.26.peg.788"/>
<dbReference type="HOGENOM" id="CLU_155308_0_0_6"/>
<dbReference type="Proteomes" id="UP000000584">
    <property type="component" value="Chromosome 1"/>
</dbReference>
<organism>
    <name type="scientific">Vibrio cholerae serotype O1 (strain ATCC 39315 / El Tor Inaba N16961)</name>
    <dbReference type="NCBI Taxonomy" id="243277"/>
    <lineage>
        <taxon>Bacteria</taxon>
        <taxon>Pseudomonadati</taxon>
        <taxon>Pseudomonadota</taxon>
        <taxon>Gammaproteobacteria</taxon>
        <taxon>Vibrionales</taxon>
        <taxon>Vibrionaceae</taxon>
        <taxon>Vibrio</taxon>
    </lineage>
</organism>
<name>TCPH_VIBCH</name>
<proteinExistence type="predicted"/>
<gene>
    <name type="primary">tcpH</name>
    <name type="ordered locus">VC_0827</name>
</gene>